<gene>
    <name type="primary">rps19</name>
    <name type="ORF">DDB_G0279207</name>
</gene>
<keyword id="KW-1185">Reference proteome</keyword>
<keyword id="KW-0687">Ribonucleoprotein</keyword>
<keyword id="KW-0689">Ribosomal protein</keyword>
<feature type="chain" id="PRO_0000320062" description="Small ribosomal subunit protein eS19">
    <location>
        <begin position="1"/>
        <end position="148"/>
    </location>
</feature>
<reference key="1">
    <citation type="journal article" date="2005" name="Nature">
        <title>The genome of the social amoeba Dictyostelium discoideum.</title>
        <authorList>
            <person name="Eichinger L."/>
            <person name="Pachebat J.A."/>
            <person name="Gloeckner G."/>
            <person name="Rajandream M.A."/>
            <person name="Sucgang R."/>
            <person name="Berriman M."/>
            <person name="Song J."/>
            <person name="Olsen R."/>
            <person name="Szafranski K."/>
            <person name="Xu Q."/>
            <person name="Tunggal B."/>
            <person name="Kummerfeld S."/>
            <person name="Madera M."/>
            <person name="Konfortov B.A."/>
            <person name="Rivero F."/>
            <person name="Bankier A.T."/>
            <person name="Lehmann R."/>
            <person name="Hamlin N."/>
            <person name="Davies R."/>
            <person name="Gaudet P."/>
            <person name="Fey P."/>
            <person name="Pilcher K."/>
            <person name="Chen G."/>
            <person name="Saunders D."/>
            <person name="Sodergren E.J."/>
            <person name="Davis P."/>
            <person name="Kerhornou A."/>
            <person name="Nie X."/>
            <person name="Hall N."/>
            <person name="Anjard C."/>
            <person name="Hemphill L."/>
            <person name="Bason N."/>
            <person name="Farbrother P."/>
            <person name="Desany B."/>
            <person name="Just E."/>
            <person name="Morio T."/>
            <person name="Rost R."/>
            <person name="Churcher C.M."/>
            <person name="Cooper J."/>
            <person name="Haydock S."/>
            <person name="van Driessche N."/>
            <person name="Cronin A."/>
            <person name="Goodhead I."/>
            <person name="Muzny D.M."/>
            <person name="Mourier T."/>
            <person name="Pain A."/>
            <person name="Lu M."/>
            <person name="Harper D."/>
            <person name="Lindsay R."/>
            <person name="Hauser H."/>
            <person name="James K.D."/>
            <person name="Quiles M."/>
            <person name="Madan Babu M."/>
            <person name="Saito T."/>
            <person name="Buchrieser C."/>
            <person name="Wardroper A."/>
            <person name="Felder M."/>
            <person name="Thangavelu M."/>
            <person name="Johnson D."/>
            <person name="Knights A."/>
            <person name="Loulseged H."/>
            <person name="Mungall K.L."/>
            <person name="Oliver K."/>
            <person name="Price C."/>
            <person name="Quail M.A."/>
            <person name="Urushihara H."/>
            <person name="Hernandez J."/>
            <person name="Rabbinowitsch E."/>
            <person name="Steffen D."/>
            <person name="Sanders M."/>
            <person name="Ma J."/>
            <person name="Kohara Y."/>
            <person name="Sharp S."/>
            <person name="Simmonds M.N."/>
            <person name="Spiegler S."/>
            <person name="Tivey A."/>
            <person name="Sugano S."/>
            <person name="White B."/>
            <person name="Walker D."/>
            <person name="Woodward J.R."/>
            <person name="Winckler T."/>
            <person name="Tanaka Y."/>
            <person name="Shaulsky G."/>
            <person name="Schleicher M."/>
            <person name="Weinstock G.M."/>
            <person name="Rosenthal A."/>
            <person name="Cox E.C."/>
            <person name="Chisholm R.L."/>
            <person name="Gibbs R.A."/>
            <person name="Loomis W.F."/>
            <person name="Platzer M."/>
            <person name="Kay R.R."/>
            <person name="Williams J.G."/>
            <person name="Dear P.H."/>
            <person name="Noegel A.A."/>
            <person name="Barrell B.G."/>
            <person name="Kuspa A."/>
        </authorList>
    </citation>
    <scope>NUCLEOTIDE SEQUENCE [LARGE SCALE GENOMIC DNA]</scope>
    <source>
        <strain>AX4</strain>
    </source>
</reference>
<dbReference type="EMBL" id="AAFI02000030">
    <property type="protein sequence ID" value="EAL67752.1"/>
    <property type="molecule type" value="Genomic_DNA"/>
</dbReference>
<dbReference type="RefSeq" id="XP_641726.1">
    <property type="nucleotide sequence ID" value="XM_636634.1"/>
</dbReference>
<dbReference type="SMR" id="Q54X51"/>
<dbReference type="FunCoup" id="Q54X51">
    <property type="interactions" value="568"/>
</dbReference>
<dbReference type="STRING" id="44689.Q54X51"/>
<dbReference type="PaxDb" id="44689-DDB0231059"/>
<dbReference type="EnsemblProtists" id="EAL67752">
    <property type="protein sequence ID" value="EAL67752"/>
    <property type="gene ID" value="DDB_G0279207"/>
</dbReference>
<dbReference type="GeneID" id="8621922"/>
<dbReference type="KEGG" id="ddi:DDB_G0279207"/>
<dbReference type="dictyBase" id="DDB_G0279207">
    <property type="gene designation" value="rps19"/>
</dbReference>
<dbReference type="VEuPathDB" id="AmoebaDB:DDB_G0279207"/>
<dbReference type="eggNOG" id="KOG3411">
    <property type="taxonomic scope" value="Eukaryota"/>
</dbReference>
<dbReference type="HOGENOM" id="CLU_108559_0_0_1"/>
<dbReference type="InParanoid" id="Q54X51"/>
<dbReference type="OMA" id="WAPFVKT"/>
<dbReference type="PhylomeDB" id="Q54X51"/>
<dbReference type="Reactome" id="R-DDI-156827">
    <property type="pathway name" value="L13a-mediated translational silencing of Ceruloplasmin expression"/>
</dbReference>
<dbReference type="Reactome" id="R-DDI-1799339">
    <property type="pathway name" value="SRP-dependent cotranslational protein targeting to membrane"/>
</dbReference>
<dbReference type="Reactome" id="R-DDI-72689">
    <property type="pathway name" value="Formation of a pool of free 40S subunits"/>
</dbReference>
<dbReference type="Reactome" id="R-DDI-72695">
    <property type="pathway name" value="Formation of the ternary complex, and subsequently, the 43S complex"/>
</dbReference>
<dbReference type="Reactome" id="R-DDI-72702">
    <property type="pathway name" value="Ribosomal scanning and start codon recognition"/>
</dbReference>
<dbReference type="Reactome" id="R-DDI-72706">
    <property type="pathway name" value="GTP hydrolysis and joining of the 60S ribosomal subunit"/>
</dbReference>
<dbReference type="Reactome" id="R-DDI-975956">
    <property type="pathway name" value="Nonsense Mediated Decay (NMD) independent of the Exon Junction Complex (EJC)"/>
</dbReference>
<dbReference type="Reactome" id="R-DDI-975957">
    <property type="pathway name" value="Nonsense Mediated Decay (NMD) enhanced by the Exon Junction Complex (EJC)"/>
</dbReference>
<dbReference type="PRO" id="PR:Q54X51"/>
<dbReference type="Proteomes" id="UP000002195">
    <property type="component" value="Chromosome 3"/>
</dbReference>
<dbReference type="GO" id="GO:0022627">
    <property type="term" value="C:cytosolic small ribosomal subunit"/>
    <property type="evidence" value="ECO:0000250"/>
    <property type="project" value="dictyBase"/>
</dbReference>
<dbReference type="GO" id="GO:0003723">
    <property type="term" value="F:RNA binding"/>
    <property type="evidence" value="ECO:0000250"/>
    <property type="project" value="dictyBase"/>
</dbReference>
<dbReference type="GO" id="GO:0003735">
    <property type="term" value="F:structural constituent of ribosome"/>
    <property type="evidence" value="ECO:0000250"/>
    <property type="project" value="dictyBase"/>
</dbReference>
<dbReference type="GO" id="GO:0000028">
    <property type="term" value="P:ribosomal small subunit assembly"/>
    <property type="evidence" value="ECO:0000250"/>
    <property type="project" value="dictyBase"/>
</dbReference>
<dbReference type="GO" id="GO:0006412">
    <property type="term" value="P:translation"/>
    <property type="evidence" value="ECO:0007669"/>
    <property type="project" value="InterPro"/>
</dbReference>
<dbReference type="FunFam" id="1.10.10.10:FF:000449">
    <property type="entry name" value="30S ribosomal protein S19e"/>
    <property type="match status" value="1"/>
</dbReference>
<dbReference type="Gene3D" id="1.10.10.10">
    <property type="entry name" value="Winged helix-like DNA-binding domain superfamily/Winged helix DNA-binding domain"/>
    <property type="match status" value="1"/>
</dbReference>
<dbReference type="InterPro" id="IPR001266">
    <property type="entry name" value="Ribosomal_eS19"/>
</dbReference>
<dbReference type="InterPro" id="IPR036388">
    <property type="entry name" value="WH-like_DNA-bd_sf"/>
</dbReference>
<dbReference type="InterPro" id="IPR036390">
    <property type="entry name" value="WH_DNA-bd_sf"/>
</dbReference>
<dbReference type="PANTHER" id="PTHR11710">
    <property type="entry name" value="40S RIBOSOMAL PROTEIN S19"/>
    <property type="match status" value="1"/>
</dbReference>
<dbReference type="PANTHER" id="PTHR11710:SF0">
    <property type="entry name" value="40S RIBOSOMAL PROTEIN S19"/>
    <property type="match status" value="1"/>
</dbReference>
<dbReference type="Pfam" id="PF01090">
    <property type="entry name" value="Ribosomal_S19e"/>
    <property type="match status" value="1"/>
</dbReference>
<dbReference type="SMART" id="SM01413">
    <property type="entry name" value="Ribosomal_S19e"/>
    <property type="match status" value="1"/>
</dbReference>
<dbReference type="SUPFAM" id="SSF46785">
    <property type="entry name" value="Winged helix' DNA-binding domain"/>
    <property type="match status" value="1"/>
</dbReference>
<name>RS19_DICDI</name>
<organism>
    <name type="scientific">Dictyostelium discoideum</name>
    <name type="common">Social amoeba</name>
    <dbReference type="NCBI Taxonomy" id="44689"/>
    <lineage>
        <taxon>Eukaryota</taxon>
        <taxon>Amoebozoa</taxon>
        <taxon>Evosea</taxon>
        <taxon>Eumycetozoa</taxon>
        <taxon>Dictyostelia</taxon>
        <taxon>Dictyosteliales</taxon>
        <taxon>Dictyosteliaceae</taxon>
        <taxon>Dictyostelium</taxon>
    </lineage>
</organism>
<sequence length="148" mass="16876">MATTAVTLKDVCPQEFIATYARFLKKTGRVQIPKWNDIAKTATYRELPPTNPDWIYYRIATLARKVYIRGGDGVATYRRVFGGNRRNGVRPNHFADVNGGNIRYCLKQLQNLKVIETDAVKGGRTITATGRRDLDRIAKQIYDKKNKI</sequence>
<accession>Q54X51</accession>
<evidence type="ECO:0000305" key="1"/>
<proteinExistence type="inferred from homology"/>
<comment type="similarity">
    <text evidence="1">Belongs to the eukaryotic ribosomal protein eS19 family.</text>
</comment>
<protein>
    <recommendedName>
        <fullName evidence="1">Small ribosomal subunit protein eS19</fullName>
    </recommendedName>
    <alternativeName>
        <fullName>40S ribosomal protein S19</fullName>
    </alternativeName>
</protein>